<sequence length="387" mass="44455">MGRVGVLLLNLGGPDRLEDVRPFLFNLFSDPEIIRLPVPWLQKPLAWLISTLRSRKSQENYLQIGGGSPLRKITEAQAEALEKRLEEIGHSVQVYIGMRYWHPFTEEAIARIKRDRIQKLVILPLYPQFSISTSGSSFRVLEEIWKQDPSLKQIEYSLIPSWYDNPGYLEAMADLISQELGQYSNPDTVHIFFSAHGVPQSYVDEAGDPYQKEIEECTRLIMKTLNRPNDYTLAYQSRVGPVEWLKPYTEDALKELGEQGIKEILVIPISFVSEHIETLQEIDIEYREVAEEAGIDHFQRVPALNTHPIFIDSLAQLVINSLTENSYTFEEITRPKKNMKMYPQERWEWGMTTAAEVWNGRLAMIGFIALLIELISGHGPLHFVGLL</sequence>
<proteinExistence type="inferred from homology"/>
<dbReference type="EC" id="4.98.1.1" evidence="1"/>
<dbReference type="EMBL" id="CP001291">
    <property type="protein sequence ID" value="ACK70590.1"/>
    <property type="molecule type" value="Genomic_DNA"/>
</dbReference>
<dbReference type="RefSeq" id="WP_015954196.1">
    <property type="nucleotide sequence ID" value="NC_011729.1"/>
</dbReference>
<dbReference type="SMR" id="B7KGB9"/>
<dbReference type="STRING" id="65393.PCC7424_2167"/>
<dbReference type="KEGG" id="cyc:PCC7424_2167"/>
<dbReference type="eggNOG" id="COG0276">
    <property type="taxonomic scope" value="Bacteria"/>
</dbReference>
<dbReference type="HOGENOM" id="CLU_018884_4_1_3"/>
<dbReference type="OrthoDB" id="9809741at2"/>
<dbReference type="UniPathway" id="UPA00252">
    <property type="reaction ID" value="UER00325"/>
</dbReference>
<dbReference type="Proteomes" id="UP000002384">
    <property type="component" value="Chromosome"/>
</dbReference>
<dbReference type="GO" id="GO:0005737">
    <property type="term" value="C:cytoplasm"/>
    <property type="evidence" value="ECO:0007669"/>
    <property type="project" value="UniProtKB-SubCell"/>
</dbReference>
<dbReference type="GO" id="GO:0004325">
    <property type="term" value="F:ferrochelatase activity"/>
    <property type="evidence" value="ECO:0007669"/>
    <property type="project" value="UniProtKB-UniRule"/>
</dbReference>
<dbReference type="GO" id="GO:0046872">
    <property type="term" value="F:metal ion binding"/>
    <property type="evidence" value="ECO:0007669"/>
    <property type="project" value="UniProtKB-KW"/>
</dbReference>
<dbReference type="GO" id="GO:0006783">
    <property type="term" value="P:heme biosynthetic process"/>
    <property type="evidence" value="ECO:0007669"/>
    <property type="project" value="UniProtKB-UniRule"/>
</dbReference>
<dbReference type="CDD" id="cd00419">
    <property type="entry name" value="Ferrochelatase_C"/>
    <property type="match status" value="1"/>
</dbReference>
<dbReference type="CDD" id="cd03411">
    <property type="entry name" value="Ferrochelatase_N"/>
    <property type="match status" value="1"/>
</dbReference>
<dbReference type="FunFam" id="3.40.50.1400:FF:000006">
    <property type="entry name" value="Ferrochelatase"/>
    <property type="match status" value="1"/>
</dbReference>
<dbReference type="Gene3D" id="3.40.50.1400">
    <property type="match status" value="2"/>
</dbReference>
<dbReference type="HAMAP" id="MF_00323">
    <property type="entry name" value="Ferrochelatase"/>
    <property type="match status" value="1"/>
</dbReference>
<dbReference type="InterPro" id="IPR001015">
    <property type="entry name" value="Ferrochelatase"/>
</dbReference>
<dbReference type="InterPro" id="IPR019772">
    <property type="entry name" value="Ferrochelatase_AS"/>
</dbReference>
<dbReference type="InterPro" id="IPR033644">
    <property type="entry name" value="Ferrochelatase_C"/>
</dbReference>
<dbReference type="InterPro" id="IPR033659">
    <property type="entry name" value="Ferrochelatase_N"/>
</dbReference>
<dbReference type="NCBIfam" id="TIGR00109">
    <property type="entry name" value="hemH"/>
    <property type="match status" value="1"/>
</dbReference>
<dbReference type="PANTHER" id="PTHR11108">
    <property type="entry name" value="FERROCHELATASE"/>
    <property type="match status" value="1"/>
</dbReference>
<dbReference type="PANTHER" id="PTHR11108:SF1">
    <property type="entry name" value="FERROCHELATASE, MITOCHONDRIAL"/>
    <property type="match status" value="1"/>
</dbReference>
<dbReference type="Pfam" id="PF00762">
    <property type="entry name" value="Ferrochelatase"/>
    <property type="match status" value="1"/>
</dbReference>
<dbReference type="SUPFAM" id="SSF53800">
    <property type="entry name" value="Chelatase"/>
    <property type="match status" value="1"/>
</dbReference>
<dbReference type="SUPFAM" id="SSF103511">
    <property type="entry name" value="Chlorophyll a-b binding protein"/>
    <property type="match status" value="1"/>
</dbReference>
<dbReference type="PROSITE" id="PS00534">
    <property type="entry name" value="FERROCHELATASE"/>
    <property type="match status" value="1"/>
</dbReference>
<name>HEMH_GLOC7</name>
<keyword id="KW-0963">Cytoplasm</keyword>
<keyword id="KW-0350">Heme biosynthesis</keyword>
<keyword id="KW-0408">Iron</keyword>
<keyword id="KW-0456">Lyase</keyword>
<keyword id="KW-0479">Metal-binding</keyword>
<keyword id="KW-0627">Porphyrin biosynthesis</keyword>
<keyword id="KW-1185">Reference proteome</keyword>
<comment type="function">
    <text evidence="1">Catalyzes the ferrous insertion into protoporphyrin IX.</text>
</comment>
<comment type="catalytic activity">
    <reaction evidence="1">
        <text>heme b + 2 H(+) = protoporphyrin IX + Fe(2+)</text>
        <dbReference type="Rhea" id="RHEA:22584"/>
        <dbReference type="ChEBI" id="CHEBI:15378"/>
        <dbReference type="ChEBI" id="CHEBI:29033"/>
        <dbReference type="ChEBI" id="CHEBI:57306"/>
        <dbReference type="ChEBI" id="CHEBI:60344"/>
        <dbReference type="EC" id="4.98.1.1"/>
    </reaction>
</comment>
<comment type="pathway">
    <text evidence="1">Porphyrin-containing compound metabolism; protoheme biosynthesis; protoheme from protoporphyrin-IX: step 1/1.</text>
</comment>
<comment type="subcellular location">
    <subcellularLocation>
        <location evidence="1">Cytoplasm</location>
    </subcellularLocation>
</comment>
<comment type="similarity">
    <text evidence="1">Belongs to the ferrochelatase family.</text>
</comment>
<protein>
    <recommendedName>
        <fullName evidence="1">Ferrochelatase</fullName>
        <ecNumber evidence="1">4.98.1.1</ecNumber>
    </recommendedName>
    <alternativeName>
        <fullName evidence="1">Heme synthase</fullName>
    </alternativeName>
    <alternativeName>
        <fullName evidence="1">Protoheme ferro-lyase</fullName>
    </alternativeName>
</protein>
<evidence type="ECO:0000255" key="1">
    <source>
        <dbReference type="HAMAP-Rule" id="MF_00323"/>
    </source>
</evidence>
<gene>
    <name evidence="1" type="primary">hemH</name>
    <name type="ordered locus">PCC7424_2167</name>
</gene>
<feature type="chain" id="PRO_1000119604" description="Ferrochelatase">
    <location>
        <begin position="1"/>
        <end position="387"/>
    </location>
</feature>
<feature type="binding site" evidence="1">
    <location>
        <position position="196"/>
    </location>
    <ligand>
        <name>Fe cation</name>
        <dbReference type="ChEBI" id="CHEBI:24875"/>
    </ligand>
</feature>
<feature type="binding site" evidence="1">
    <location>
        <position position="277"/>
    </location>
    <ligand>
        <name>Fe cation</name>
        <dbReference type="ChEBI" id="CHEBI:24875"/>
    </ligand>
</feature>
<accession>B7KGB9</accession>
<reference key="1">
    <citation type="journal article" date="2011" name="MBio">
        <title>Novel metabolic attributes of the genus Cyanothece, comprising a group of unicellular nitrogen-fixing Cyanobacteria.</title>
        <authorList>
            <person name="Bandyopadhyay A."/>
            <person name="Elvitigala T."/>
            <person name="Welsh E."/>
            <person name="Stockel J."/>
            <person name="Liberton M."/>
            <person name="Min H."/>
            <person name="Sherman L.A."/>
            <person name="Pakrasi H.B."/>
        </authorList>
    </citation>
    <scope>NUCLEOTIDE SEQUENCE [LARGE SCALE GENOMIC DNA]</scope>
    <source>
        <strain>PCC 7424</strain>
    </source>
</reference>
<organism>
    <name type="scientific">Gloeothece citriformis (strain PCC 7424)</name>
    <name type="common">Cyanothece sp. (strain PCC 7424)</name>
    <dbReference type="NCBI Taxonomy" id="65393"/>
    <lineage>
        <taxon>Bacteria</taxon>
        <taxon>Bacillati</taxon>
        <taxon>Cyanobacteriota</taxon>
        <taxon>Cyanophyceae</taxon>
        <taxon>Oscillatoriophycideae</taxon>
        <taxon>Chroococcales</taxon>
        <taxon>Aphanothecaceae</taxon>
        <taxon>Gloeothece</taxon>
        <taxon>Gloeothece citriformis</taxon>
    </lineage>
</organism>